<sequence length="276" mass="31429">MIVIGRSIVHPYITNEYEPFANEKQQILSIMAGNQEIYSFRTSGELSFDLNLRVNIITSALELFQSGFQFRTFQQSFCNPQYWKRTSLGGFELLPNIPPSIAIQDIFKNGKLYGTECATAMIIIFYKALLALYEEETFNRLFANLLLYTWDYDQDLKLITKTGGDLVPGDLVYFKNPQVNPATIEWQGENTIYLGNFFFYGHGVGVKTKEEIIYALNERRVPYAFISAFLTDTITRIDSRLMSYHASPSTPQTSIGFIPIRDDAIVATVGNTTTVY</sequence>
<protein>
    <recommendedName>
        <fullName evidence="1">Protein-glutamine gamma-glutamyltransferase</fullName>
        <ecNumber evidence="1">2.3.2.13</ecNumber>
    </recommendedName>
    <alternativeName>
        <fullName evidence="1">Transglutaminase</fullName>
        <shortName evidence="1">TGase</shortName>
    </alternativeName>
</protein>
<feature type="chain" id="PRO_1000197963" description="Protein-glutamine gamma-glutamyltransferase">
    <location>
        <begin position="1"/>
        <end position="276"/>
    </location>
</feature>
<gene>
    <name evidence="1" type="primary">tgl</name>
    <name type="ordered locus">BCAH187_A4082</name>
</gene>
<organism>
    <name type="scientific">Bacillus cereus (strain AH187)</name>
    <dbReference type="NCBI Taxonomy" id="405534"/>
    <lineage>
        <taxon>Bacteria</taxon>
        <taxon>Bacillati</taxon>
        <taxon>Bacillota</taxon>
        <taxon>Bacilli</taxon>
        <taxon>Bacillales</taxon>
        <taxon>Bacillaceae</taxon>
        <taxon>Bacillus</taxon>
        <taxon>Bacillus cereus group</taxon>
    </lineage>
</organism>
<proteinExistence type="inferred from homology"/>
<evidence type="ECO:0000255" key="1">
    <source>
        <dbReference type="HAMAP-Rule" id="MF_00727"/>
    </source>
</evidence>
<comment type="function">
    <text evidence="1">Probably plays a role in the assembly of the spore coat proteins by catalyzing epsilon-(gamma-glutamyl)lysine cross-links.</text>
</comment>
<comment type="catalytic activity">
    <reaction evidence="1">
        <text>L-glutaminyl-[protein] + L-lysyl-[protein] = [protein]-L-lysyl-N(6)-5-L-glutamyl-[protein] + NH4(+)</text>
        <dbReference type="Rhea" id="RHEA:54816"/>
        <dbReference type="Rhea" id="RHEA-COMP:9752"/>
        <dbReference type="Rhea" id="RHEA-COMP:10207"/>
        <dbReference type="Rhea" id="RHEA-COMP:14005"/>
        <dbReference type="ChEBI" id="CHEBI:28938"/>
        <dbReference type="ChEBI" id="CHEBI:29969"/>
        <dbReference type="ChEBI" id="CHEBI:30011"/>
        <dbReference type="ChEBI" id="CHEBI:138370"/>
        <dbReference type="EC" id="2.3.2.13"/>
    </reaction>
</comment>
<comment type="similarity">
    <text evidence="1">Belongs to the bacillus TGase family.</text>
</comment>
<keyword id="KW-0012">Acyltransferase</keyword>
<keyword id="KW-0749">Sporulation</keyword>
<keyword id="KW-0808">Transferase</keyword>
<accession>B7HME8</accession>
<dbReference type="EC" id="2.3.2.13" evidence="1"/>
<dbReference type="EMBL" id="CP001177">
    <property type="protein sequence ID" value="ACJ78754.1"/>
    <property type="molecule type" value="Genomic_DNA"/>
</dbReference>
<dbReference type="SMR" id="B7HME8"/>
<dbReference type="KEGG" id="bcr:BCAH187_A4082"/>
<dbReference type="HOGENOM" id="CLU_088922_0_0_9"/>
<dbReference type="Proteomes" id="UP000002214">
    <property type="component" value="Chromosome"/>
</dbReference>
<dbReference type="GO" id="GO:0003810">
    <property type="term" value="F:protein-glutamine gamma-glutamyltransferase activity"/>
    <property type="evidence" value="ECO:0007669"/>
    <property type="project" value="UniProtKB-UniRule"/>
</dbReference>
<dbReference type="GO" id="GO:0030435">
    <property type="term" value="P:sporulation resulting in formation of a cellular spore"/>
    <property type="evidence" value="ECO:0007669"/>
    <property type="project" value="UniProtKB-UniRule"/>
</dbReference>
<dbReference type="HAMAP" id="MF_00727">
    <property type="entry name" value="Tgl"/>
    <property type="match status" value="1"/>
</dbReference>
<dbReference type="InterPro" id="IPR020916">
    <property type="entry name" value="Gln_gamma-glutamylTfrase_bac"/>
</dbReference>
<dbReference type="NCBIfam" id="NF002869">
    <property type="entry name" value="PRK03187.1"/>
    <property type="match status" value="1"/>
</dbReference>
<dbReference type="Pfam" id="PF20085">
    <property type="entry name" value="TGL"/>
    <property type="match status" value="1"/>
</dbReference>
<name>TGL_BACC7</name>
<reference key="1">
    <citation type="submission" date="2008-10" db="EMBL/GenBank/DDBJ databases">
        <title>Genome sequence of Bacillus cereus AH187.</title>
        <authorList>
            <person name="Dodson R.J."/>
            <person name="Durkin A.S."/>
            <person name="Rosovitz M.J."/>
            <person name="Rasko D.A."/>
            <person name="Kolsto A.B."/>
            <person name="Okstad O.A."/>
            <person name="Ravel J."/>
            <person name="Sutton G."/>
        </authorList>
    </citation>
    <scope>NUCLEOTIDE SEQUENCE [LARGE SCALE GENOMIC DNA]</scope>
    <source>
        <strain>AH187</strain>
    </source>
</reference>